<protein>
    <recommendedName>
        <fullName>Calmodulin-regulated spectrin-associated protein 1</fullName>
    </recommendedName>
</protein>
<dbReference type="EMBL" id="AL731682">
    <property type="status" value="NOT_ANNOTATED_CDS"/>
    <property type="molecule type" value="Genomic_DNA"/>
</dbReference>
<dbReference type="EMBL" id="BC054553">
    <property type="protein sequence ID" value="AAH54553.1"/>
    <property type="status" value="ALT_INIT"/>
    <property type="molecule type" value="mRNA"/>
</dbReference>
<dbReference type="EMBL" id="AK035221">
    <property type="protein sequence ID" value="BAC28983.1"/>
    <property type="molecule type" value="mRNA"/>
</dbReference>
<dbReference type="RefSeq" id="NP_001263288.1">
    <property type="nucleotide sequence ID" value="NM_001276359.1"/>
</dbReference>
<dbReference type="RefSeq" id="NP_001263289.1">
    <property type="nucleotide sequence ID" value="NM_001276360.1"/>
</dbReference>
<dbReference type="RefSeq" id="NP_001263290.1">
    <property type="nucleotide sequence ID" value="NM_001276361.1"/>
</dbReference>
<dbReference type="SMR" id="A2AHC3"/>
<dbReference type="BioGRID" id="230653">
    <property type="interactions" value="8"/>
</dbReference>
<dbReference type="FunCoup" id="A2AHC3">
    <property type="interactions" value="1412"/>
</dbReference>
<dbReference type="IntAct" id="A2AHC3">
    <property type="interactions" value="2"/>
</dbReference>
<dbReference type="MINT" id="A2AHC3"/>
<dbReference type="STRING" id="10090.ENSMUSP00000109804"/>
<dbReference type="GlyGen" id="A2AHC3">
    <property type="glycosylation" value="5 sites, 1 O-linked glycan (2 sites)"/>
</dbReference>
<dbReference type="iPTMnet" id="A2AHC3"/>
<dbReference type="PhosphoSitePlus" id="A2AHC3"/>
<dbReference type="jPOST" id="A2AHC3"/>
<dbReference type="PaxDb" id="10090-ENSMUSP00000109804"/>
<dbReference type="PeptideAtlas" id="A2AHC3"/>
<dbReference type="ProteomicsDB" id="265517">
    <molecule id="A2AHC3-1"/>
</dbReference>
<dbReference type="ProteomicsDB" id="265518">
    <molecule id="A2AHC3-2"/>
</dbReference>
<dbReference type="Pumba" id="A2AHC3"/>
<dbReference type="Antibodypedia" id="18656">
    <property type="antibodies" value="128 antibodies from 20 providers"/>
</dbReference>
<dbReference type="Ensembl" id="ENSMUST00000183461.8">
    <molecule id="A2AHC3-1"/>
    <property type="protein sequence ID" value="ENSMUSP00000139028.2"/>
    <property type="gene ID" value="ENSMUSG00000026933.19"/>
</dbReference>
<dbReference type="GeneID" id="227634"/>
<dbReference type="KEGG" id="mmu:227634"/>
<dbReference type="AGR" id="MGI:3036242"/>
<dbReference type="CTD" id="157922"/>
<dbReference type="MGI" id="MGI:3036242">
    <property type="gene designation" value="Camsap1"/>
</dbReference>
<dbReference type="VEuPathDB" id="HostDB:ENSMUSG00000026933"/>
<dbReference type="eggNOG" id="KOG3654">
    <property type="taxonomic scope" value="Eukaryota"/>
</dbReference>
<dbReference type="GeneTree" id="ENSGT00950000182975"/>
<dbReference type="InParanoid" id="A2AHC3"/>
<dbReference type="OrthoDB" id="2125658at2759"/>
<dbReference type="PhylomeDB" id="A2AHC3"/>
<dbReference type="TreeFam" id="TF315529"/>
<dbReference type="BioGRID-ORCS" id="227634">
    <property type="hits" value="2 hits in 78 CRISPR screens"/>
</dbReference>
<dbReference type="CD-CODE" id="CE726F99">
    <property type="entry name" value="Postsynaptic density"/>
</dbReference>
<dbReference type="ChiTaRS" id="Camsap1">
    <property type="organism name" value="mouse"/>
</dbReference>
<dbReference type="PRO" id="PR:A2AHC3"/>
<dbReference type="Proteomes" id="UP000000589">
    <property type="component" value="Chromosome 2"/>
</dbReference>
<dbReference type="RNAct" id="A2AHC3">
    <property type="molecule type" value="protein"/>
</dbReference>
<dbReference type="Bgee" id="ENSMUSG00000026933">
    <property type="expression patterns" value="Expressed in embryonic post-anal tail and 241 other cell types or tissues"/>
</dbReference>
<dbReference type="ExpressionAtlas" id="A2AHC3">
    <property type="expression patterns" value="baseline and differential"/>
</dbReference>
<dbReference type="GO" id="GO:0005737">
    <property type="term" value="C:cytoplasm"/>
    <property type="evidence" value="ECO:0007669"/>
    <property type="project" value="UniProtKB-KW"/>
</dbReference>
<dbReference type="GO" id="GO:0005874">
    <property type="term" value="C:microtubule"/>
    <property type="evidence" value="ECO:0000250"/>
    <property type="project" value="UniProtKB"/>
</dbReference>
<dbReference type="GO" id="GO:0005516">
    <property type="term" value="F:calmodulin binding"/>
    <property type="evidence" value="ECO:0000250"/>
    <property type="project" value="UniProtKB"/>
</dbReference>
<dbReference type="GO" id="GO:0008017">
    <property type="term" value="F:microtubule binding"/>
    <property type="evidence" value="ECO:0000250"/>
    <property type="project" value="UniProtKB"/>
</dbReference>
<dbReference type="GO" id="GO:0051011">
    <property type="term" value="F:microtubule minus-end binding"/>
    <property type="evidence" value="ECO:0000250"/>
    <property type="project" value="UniProtKB"/>
</dbReference>
<dbReference type="GO" id="GO:0030507">
    <property type="term" value="F:spectrin binding"/>
    <property type="evidence" value="ECO:0000250"/>
    <property type="project" value="UniProtKB"/>
</dbReference>
<dbReference type="GO" id="GO:0007010">
    <property type="term" value="P:cytoskeleton organization"/>
    <property type="evidence" value="ECO:0000250"/>
    <property type="project" value="UniProtKB"/>
</dbReference>
<dbReference type="GO" id="GO:0000226">
    <property type="term" value="P:microtubule cytoskeleton organization"/>
    <property type="evidence" value="ECO:0000250"/>
    <property type="project" value="UniProtKB"/>
</dbReference>
<dbReference type="GO" id="GO:0031175">
    <property type="term" value="P:neuron projection development"/>
    <property type="evidence" value="ECO:0000250"/>
    <property type="project" value="UniProtKB"/>
</dbReference>
<dbReference type="GO" id="GO:0022604">
    <property type="term" value="P:regulation of cell morphogenesis"/>
    <property type="evidence" value="ECO:0000250"/>
    <property type="project" value="UniProtKB"/>
</dbReference>
<dbReference type="GO" id="GO:0031113">
    <property type="term" value="P:regulation of microtubule polymerization"/>
    <property type="evidence" value="ECO:0000250"/>
    <property type="project" value="UniProtKB"/>
</dbReference>
<dbReference type="FunFam" id="3.10.20.360:FF:000001">
    <property type="entry name" value="Calmodulin-regulated spectrin-associated protein 3 isoform 2"/>
    <property type="match status" value="1"/>
</dbReference>
<dbReference type="Gene3D" id="3.10.20.360">
    <property type="entry name" value="CKK domain"/>
    <property type="match status" value="1"/>
</dbReference>
<dbReference type="InterPro" id="IPR032940">
    <property type="entry name" value="CAMSAP"/>
</dbReference>
<dbReference type="InterPro" id="IPR022613">
    <property type="entry name" value="CAMSAP-like_CH_dom"/>
</dbReference>
<dbReference type="InterPro" id="IPR031372">
    <property type="entry name" value="CAMSAP_CC1"/>
</dbReference>
<dbReference type="InterPro" id="IPR001715">
    <property type="entry name" value="CH_dom"/>
</dbReference>
<dbReference type="InterPro" id="IPR036872">
    <property type="entry name" value="CH_dom_sf"/>
</dbReference>
<dbReference type="InterPro" id="IPR038209">
    <property type="entry name" value="CKK_dom_sf"/>
</dbReference>
<dbReference type="InterPro" id="IPR014797">
    <property type="entry name" value="CKK_domain"/>
</dbReference>
<dbReference type="InterPro" id="IPR011033">
    <property type="entry name" value="PRC_barrel-like_sf"/>
</dbReference>
<dbReference type="PANTHER" id="PTHR21595:SF3">
    <property type="entry name" value="CALMODULIN-REGULATED SPECTRIN-ASSOCIATED PROTEIN 1"/>
    <property type="match status" value="1"/>
</dbReference>
<dbReference type="PANTHER" id="PTHR21595">
    <property type="entry name" value="PATRONIN"/>
    <property type="match status" value="1"/>
</dbReference>
<dbReference type="Pfam" id="PF17095">
    <property type="entry name" value="CAMSAP_CC1"/>
    <property type="match status" value="1"/>
</dbReference>
<dbReference type="Pfam" id="PF11971">
    <property type="entry name" value="CAMSAP_CH"/>
    <property type="match status" value="1"/>
</dbReference>
<dbReference type="Pfam" id="PF08683">
    <property type="entry name" value="CAMSAP_CKK"/>
    <property type="match status" value="1"/>
</dbReference>
<dbReference type="SMART" id="SM01051">
    <property type="entry name" value="CAMSAP_CKK"/>
    <property type="match status" value="1"/>
</dbReference>
<dbReference type="SUPFAM" id="SSF47576">
    <property type="entry name" value="Calponin-homology domain, CH-domain"/>
    <property type="match status" value="1"/>
</dbReference>
<dbReference type="SUPFAM" id="SSF50346">
    <property type="entry name" value="PRC-barrel domain"/>
    <property type="match status" value="1"/>
</dbReference>
<dbReference type="PROSITE" id="PS50021">
    <property type="entry name" value="CH"/>
    <property type="match status" value="1"/>
</dbReference>
<dbReference type="PROSITE" id="PS51508">
    <property type="entry name" value="CKK"/>
    <property type="match status" value="1"/>
</dbReference>
<sequence>MVDAGGRCAAEGWRRMEAPPEGADLVPLDRYDAARAKIAANLQWICAKAYGLDNIPEDLRDPFYIDQYEQEHIKPPVIKLLLSSELYCRVCSLILKGDQVATLQGHQSVIQALSRKGIYVMESDDTPVTDADLSQAPIKMSGHMAMVDALMMAYTVEMISIEKVVASVKRFSTFSASKELPYDLEDAMVFWINKVNLKMREITEKEVKLKQQPLESPAHQKVRYRREHLSARQSPYFPLLEDLMRDGSDGAALLAVVHYYCPEQMKLDDICLKEVPSMADSLYNIRLLREFSNEHLNKCFYLTLEDMLYAPLVLKPNVMVFIAELFWWFENVKPDFVQPRDIQELKDAKTVLQQKSSRPPVPISNATKRSFLGSPAAMSPADQPPSTQPLAEGSHRYHLHSEEPECLGKGASTFSPSHPLLPLRQKQQKVSQTEEIPDQRHRSNSLTRVDGQPRGAIGAWPDKKNRPVSQPTSFALHHAASCDVDPSSGDSVSLARSISKDSLASNIIHLTPQNQPHPSAGKSNGKSLLSNVNIEDEDEELVAIIRTDVSPPSPQMPRTSPQAPGLVASIRSPQRQADTLESKPDSFYLEPLMPAVLRPAKEKQITTKEDERGEGRPRTIMAKRPSEGSQPMVRKKVSGGHGSRDLNRTFTPIPCSEFAASIDLAEVGPQSAEATGEGQPLALGRFDTLPQGQAADGFFLHVGRAEEDEGRWYVGSQSPSSHDSEPWTILRQDSDSDVVDVEDTEQDFIGEDHPVVIPRYAGEEESAKLQEDMKVKEHEDKDDASGRSSPCLSTTSQLSSMSMASGSVKMTSFAERKLQRLNSCETKSSTSSSQKTTPDASESCPAPLTTWRQKREQSPGRHSKDPASLLASELVQLHMQLEEKRRAIEAQKKKMEALSARQRLKLGKAAFLHVVKKGKADGAPQPLRPEHFTKEFTQHNGEDLDDGTCKTEGFLVKEEQRDLSDAQDVAFVQLHKPRDPAALHDGEKHRMISTALLEDSVGEVDVNECDLSIEKLNETISTLQQAILKISQQQEQLLMKSPTVPTPGTKNNCQDQKIKAPVHFVEPLSPTGVPGHRKPPRLGQGRNSRSGRPAELKVPKDRQQGCSRSKTPTPSVETLPQSRSLPPSTHPRSPSDPGGELPEKCLFDSYRLHDESNHRTFVLSSCKDANIVSEQVNFKEGLDTSVKEAGLSSSTITGKEHTPVEEPLRSKASLIEVDLSDLKAPDEDGEVVGHESSVELGGDSDQKPGVGFFFKDEQKAEDELAKKRAAFLLKQQRKAEEARARKQQLEAEVELKRDEARRKAEEDRLRKEEEKARRELIKQEYLRRKQQQALEEQGLGKPKSKPKKPRPKSVHREESYSDSGTKCSSTHNLSQTHSGSSLSLASAATTEPESVYSGGTPSHRVESLEALPILSRNPSRSTDRDWETASAASSLASVAEYTGPKLFKEPSSKSNKPIIHNAISHCCLAGKVNEPHKNSILELEKCDANHYIILFRDAGCQFRALYCYQPDTEEIYKLTGTGPKSITKKMIDKLYKYSSDRKQFNLIPAKTMSVSVDALTIHNHLWQPKRPTVPKKTQTRK</sequence>
<feature type="chain" id="PRO_0000316829" description="Calmodulin-regulated spectrin-associated protein 1">
    <location>
        <begin position="1"/>
        <end position="1581"/>
    </location>
</feature>
<feature type="domain" description="Calponin-homology (CH)" evidence="5">
    <location>
        <begin position="215"/>
        <end position="330"/>
    </location>
</feature>
<feature type="domain" description="CKK" evidence="6">
    <location>
        <begin position="1443"/>
        <end position="1576"/>
    </location>
</feature>
<feature type="region of interest" description="Disordered" evidence="7">
    <location>
        <begin position="351"/>
        <end position="399"/>
    </location>
</feature>
<feature type="region of interest" description="Disordered" evidence="7">
    <location>
        <begin position="424"/>
        <end position="470"/>
    </location>
</feature>
<feature type="region of interest" description="Disordered" evidence="7">
    <location>
        <begin position="603"/>
        <end position="649"/>
    </location>
</feature>
<feature type="region of interest" description="Disordered" evidence="7">
    <location>
        <begin position="765"/>
        <end position="803"/>
    </location>
</feature>
<feature type="region of interest" description="Disordered" evidence="7">
    <location>
        <begin position="821"/>
        <end position="866"/>
    </location>
</feature>
<feature type="region of interest" description="Sufficient for interaction with SPTBN1" evidence="1">
    <location>
        <begin position="867"/>
        <end position="888"/>
    </location>
</feature>
<feature type="region of interest" description="Sufficient for interaction with calmodulin" evidence="1">
    <location>
        <begin position="899"/>
        <end position="918"/>
    </location>
</feature>
<feature type="region of interest" description="Disordered" evidence="7">
    <location>
        <begin position="1064"/>
        <end position="1143"/>
    </location>
</feature>
<feature type="region of interest" description="Disordered" evidence="7">
    <location>
        <begin position="1225"/>
        <end position="1251"/>
    </location>
</feature>
<feature type="region of interest" description="Disordered" evidence="7">
    <location>
        <begin position="1288"/>
        <end position="1315"/>
    </location>
</feature>
<feature type="region of interest" description="Disordered" evidence="7">
    <location>
        <begin position="1332"/>
        <end position="1428"/>
    </location>
</feature>
<feature type="coiled-coil region" evidence="4">
    <location>
        <begin position="869"/>
        <end position="905"/>
    </location>
</feature>
<feature type="coiled-coil region" evidence="4">
    <location>
        <begin position="1005"/>
        <end position="1037"/>
    </location>
</feature>
<feature type="coiled-coil region" evidence="4">
    <location>
        <begin position="1265"/>
        <end position="1336"/>
    </location>
</feature>
<feature type="compositionally biased region" description="Basic and acidic residues" evidence="7">
    <location>
        <begin position="603"/>
        <end position="617"/>
    </location>
</feature>
<feature type="compositionally biased region" description="Basic and acidic residues" evidence="7">
    <location>
        <begin position="765"/>
        <end position="785"/>
    </location>
</feature>
<feature type="compositionally biased region" description="Low complexity" evidence="7">
    <location>
        <begin position="792"/>
        <end position="803"/>
    </location>
</feature>
<feature type="compositionally biased region" description="Low complexity" evidence="7">
    <location>
        <begin position="826"/>
        <end position="837"/>
    </location>
</feature>
<feature type="compositionally biased region" description="Basic and acidic residues" evidence="7">
    <location>
        <begin position="853"/>
        <end position="865"/>
    </location>
</feature>
<feature type="compositionally biased region" description="Basic and acidic residues" evidence="7">
    <location>
        <begin position="1092"/>
        <end position="1103"/>
    </location>
</feature>
<feature type="compositionally biased region" description="Polar residues" evidence="7">
    <location>
        <begin position="1104"/>
        <end position="1132"/>
    </location>
</feature>
<feature type="compositionally biased region" description="Basic and acidic residues" evidence="7">
    <location>
        <begin position="1225"/>
        <end position="1237"/>
    </location>
</feature>
<feature type="compositionally biased region" description="Basic residues" evidence="7">
    <location>
        <begin position="1342"/>
        <end position="1353"/>
    </location>
</feature>
<feature type="compositionally biased region" description="Polar residues" evidence="7">
    <location>
        <begin position="1361"/>
        <end position="1372"/>
    </location>
</feature>
<feature type="compositionally biased region" description="Low complexity" evidence="7">
    <location>
        <begin position="1373"/>
        <end position="1390"/>
    </location>
</feature>
<feature type="modified residue" description="Phosphoserine" evidence="3">
    <location>
        <position position="216"/>
    </location>
</feature>
<feature type="modified residue" description="Phosphoserine" evidence="3">
    <location>
        <position position="370"/>
    </location>
</feature>
<feature type="modified residue" description="Phosphoserine" evidence="3">
    <location>
        <position position="374"/>
    </location>
</feature>
<feature type="modified residue" description="Phosphoserine" evidence="3">
    <location>
        <position position="415"/>
    </location>
</feature>
<feature type="modified residue" description="Phosphothreonine" evidence="3">
    <location>
        <position position="511"/>
    </location>
</feature>
<feature type="modified residue" description="Phosphoserine" evidence="12">
    <location>
        <position position="550"/>
    </location>
</feature>
<feature type="modified residue" description="Phosphoserine" evidence="12">
    <location>
        <position position="553"/>
    </location>
</feature>
<feature type="modified residue" description="Phosphoserine" evidence="3">
    <location>
        <position position="560"/>
    </location>
</feature>
<feature type="modified residue" description="Phosphoserine" evidence="12">
    <location>
        <position position="572"/>
    </location>
</feature>
<feature type="modified residue" description="Phosphoserine" evidence="3">
    <location>
        <position position="586"/>
    </location>
</feature>
<feature type="modified residue" description="Phosphoserine" evidence="3">
    <location>
        <position position="626"/>
    </location>
</feature>
<feature type="modified residue" description="Phosphoserine" evidence="3">
    <location>
        <position position="718"/>
    </location>
</feature>
<feature type="modified residue" description="Phosphoserine" evidence="12">
    <location>
        <position position="724"/>
    </location>
</feature>
<feature type="modified residue" description="Phosphoserine" evidence="2">
    <location>
        <position position="734"/>
    </location>
</feature>
<feature type="modified residue" description="Phosphoserine" evidence="2">
    <location>
        <position position="736"/>
    </location>
</feature>
<feature type="modified residue" description="Phosphoserine" evidence="3">
    <location>
        <position position="1069"/>
    </location>
</feature>
<feature type="modified residue" description="Phosphoserine" evidence="11">
    <location>
        <position position="1133"/>
    </location>
</feature>
<feature type="modified residue" description="Phosphoserine" evidence="3">
    <location>
        <position position="1378"/>
    </location>
</feature>
<feature type="modified residue" description="Phosphoserine" evidence="12">
    <location>
        <position position="1407"/>
    </location>
</feature>
<feature type="modified residue" description="Phosphotyrosine" evidence="3">
    <location>
        <position position="1516"/>
    </location>
</feature>
<feature type="splice variant" id="VSP_030802" description="In isoform 2." evidence="9">
    <original>K</original>
    <variation>KPGLEHAVMHCMLEPVDFARV</variation>
    <location>
        <position position="221"/>
    </location>
</feature>
<feature type="splice variant" id="VSP_030803" description="In isoform 2." evidence="9">
    <original>IKAPV</original>
    <variation>ASPRR</variation>
    <location>
        <begin position="1058"/>
        <end position="1062"/>
    </location>
</feature>
<feature type="splice variant" id="VSP_030804" description="In isoform 2." evidence="9">
    <location>
        <begin position="1063"/>
        <end position="1581"/>
    </location>
</feature>
<feature type="sequence conflict" description="In Ref. 2; BAC28983." evidence="10" ref="2">
    <original>R</original>
    <variation>L</variation>
    <location>
        <position position="901"/>
    </location>
</feature>
<feature type="sequence conflict" description="In Ref. 2; BAC28983." evidence="10" ref="2">
    <original>E</original>
    <variation>EE</variation>
    <location>
        <position position="1482"/>
    </location>
</feature>
<reference key="1">
    <citation type="journal article" date="2009" name="PLoS Biol.">
        <title>Lineage-specific biology revealed by a finished genome assembly of the mouse.</title>
        <authorList>
            <person name="Church D.M."/>
            <person name="Goodstadt L."/>
            <person name="Hillier L.W."/>
            <person name="Zody M.C."/>
            <person name="Goldstein S."/>
            <person name="She X."/>
            <person name="Bult C.J."/>
            <person name="Agarwala R."/>
            <person name="Cherry J.L."/>
            <person name="DiCuccio M."/>
            <person name="Hlavina W."/>
            <person name="Kapustin Y."/>
            <person name="Meric P."/>
            <person name="Maglott D."/>
            <person name="Birtle Z."/>
            <person name="Marques A.C."/>
            <person name="Graves T."/>
            <person name="Zhou S."/>
            <person name="Teague B."/>
            <person name="Potamousis K."/>
            <person name="Churas C."/>
            <person name="Place M."/>
            <person name="Herschleb J."/>
            <person name="Runnheim R."/>
            <person name="Forrest D."/>
            <person name="Amos-Landgraf J."/>
            <person name="Schwartz D.C."/>
            <person name="Cheng Z."/>
            <person name="Lindblad-Toh K."/>
            <person name="Eichler E.E."/>
            <person name="Ponting C.P."/>
        </authorList>
    </citation>
    <scope>NUCLEOTIDE SEQUENCE [LARGE SCALE GENOMIC DNA]</scope>
    <source>
        <strain>C57BL/6J</strain>
    </source>
</reference>
<reference key="2">
    <citation type="journal article" date="2004" name="Genome Res.">
        <title>The status, quality, and expansion of the NIH full-length cDNA project: the Mammalian Gene Collection (MGC).</title>
        <authorList>
            <consortium name="The MGC Project Team"/>
        </authorList>
    </citation>
    <scope>NUCLEOTIDE SEQUENCE [LARGE SCALE MRNA] (ISOFORM 2)</scope>
    <source>
        <strain>C57BL/6J</strain>
        <tissue>Brain</tissue>
    </source>
</reference>
<reference key="3">
    <citation type="journal article" date="2005" name="Science">
        <title>The transcriptional landscape of the mammalian genome.</title>
        <authorList>
            <person name="Carninci P."/>
            <person name="Kasukawa T."/>
            <person name="Katayama S."/>
            <person name="Gough J."/>
            <person name="Frith M.C."/>
            <person name="Maeda N."/>
            <person name="Oyama R."/>
            <person name="Ravasi T."/>
            <person name="Lenhard B."/>
            <person name="Wells C."/>
            <person name="Kodzius R."/>
            <person name="Shimokawa K."/>
            <person name="Bajic V.B."/>
            <person name="Brenner S.E."/>
            <person name="Batalov S."/>
            <person name="Forrest A.R."/>
            <person name="Zavolan M."/>
            <person name="Davis M.J."/>
            <person name="Wilming L.G."/>
            <person name="Aidinis V."/>
            <person name="Allen J.E."/>
            <person name="Ambesi-Impiombato A."/>
            <person name="Apweiler R."/>
            <person name="Aturaliya R.N."/>
            <person name="Bailey T.L."/>
            <person name="Bansal M."/>
            <person name="Baxter L."/>
            <person name="Beisel K.W."/>
            <person name="Bersano T."/>
            <person name="Bono H."/>
            <person name="Chalk A.M."/>
            <person name="Chiu K.P."/>
            <person name="Choudhary V."/>
            <person name="Christoffels A."/>
            <person name="Clutterbuck D.R."/>
            <person name="Crowe M.L."/>
            <person name="Dalla E."/>
            <person name="Dalrymple B.P."/>
            <person name="de Bono B."/>
            <person name="Della Gatta G."/>
            <person name="di Bernardo D."/>
            <person name="Down T."/>
            <person name="Engstrom P."/>
            <person name="Fagiolini M."/>
            <person name="Faulkner G."/>
            <person name="Fletcher C.F."/>
            <person name="Fukushima T."/>
            <person name="Furuno M."/>
            <person name="Futaki S."/>
            <person name="Gariboldi M."/>
            <person name="Georgii-Hemming P."/>
            <person name="Gingeras T.R."/>
            <person name="Gojobori T."/>
            <person name="Green R.E."/>
            <person name="Gustincich S."/>
            <person name="Harbers M."/>
            <person name="Hayashi Y."/>
            <person name="Hensch T.K."/>
            <person name="Hirokawa N."/>
            <person name="Hill D."/>
            <person name="Huminiecki L."/>
            <person name="Iacono M."/>
            <person name="Ikeo K."/>
            <person name="Iwama A."/>
            <person name="Ishikawa T."/>
            <person name="Jakt M."/>
            <person name="Kanapin A."/>
            <person name="Katoh M."/>
            <person name="Kawasawa Y."/>
            <person name="Kelso J."/>
            <person name="Kitamura H."/>
            <person name="Kitano H."/>
            <person name="Kollias G."/>
            <person name="Krishnan S.P."/>
            <person name="Kruger A."/>
            <person name="Kummerfeld S.K."/>
            <person name="Kurochkin I.V."/>
            <person name="Lareau L.F."/>
            <person name="Lazarevic D."/>
            <person name="Lipovich L."/>
            <person name="Liu J."/>
            <person name="Liuni S."/>
            <person name="McWilliam S."/>
            <person name="Madan Babu M."/>
            <person name="Madera M."/>
            <person name="Marchionni L."/>
            <person name="Matsuda H."/>
            <person name="Matsuzawa S."/>
            <person name="Miki H."/>
            <person name="Mignone F."/>
            <person name="Miyake S."/>
            <person name="Morris K."/>
            <person name="Mottagui-Tabar S."/>
            <person name="Mulder N."/>
            <person name="Nakano N."/>
            <person name="Nakauchi H."/>
            <person name="Ng P."/>
            <person name="Nilsson R."/>
            <person name="Nishiguchi S."/>
            <person name="Nishikawa S."/>
            <person name="Nori F."/>
            <person name="Ohara O."/>
            <person name="Okazaki Y."/>
            <person name="Orlando V."/>
            <person name="Pang K.C."/>
            <person name="Pavan W.J."/>
            <person name="Pavesi G."/>
            <person name="Pesole G."/>
            <person name="Petrovsky N."/>
            <person name="Piazza S."/>
            <person name="Reed J."/>
            <person name="Reid J.F."/>
            <person name="Ring B.Z."/>
            <person name="Ringwald M."/>
            <person name="Rost B."/>
            <person name="Ruan Y."/>
            <person name="Salzberg S.L."/>
            <person name="Sandelin A."/>
            <person name="Schneider C."/>
            <person name="Schoenbach C."/>
            <person name="Sekiguchi K."/>
            <person name="Semple C.A."/>
            <person name="Seno S."/>
            <person name="Sessa L."/>
            <person name="Sheng Y."/>
            <person name="Shibata Y."/>
            <person name="Shimada H."/>
            <person name="Shimada K."/>
            <person name="Silva D."/>
            <person name="Sinclair B."/>
            <person name="Sperling S."/>
            <person name="Stupka E."/>
            <person name="Sugiura K."/>
            <person name="Sultana R."/>
            <person name="Takenaka Y."/>
            <person name="Taki K."/>
            <person name="Tammoja K."/>
            <person name="Tan S.L."/>
            <person name="Tang S."/>
            <person name="Taylor M.S."/>
            <person name="Tegner J."/>
            <person name="Teichmann S.A."/>
            <person name="Ueda H.R."/>
            <person name="van Nimwegen E."/>
            <person name="Verardo R."/>
            <person name="Wei C.L."/>
            <person name="Yagi K."/>
            <person name="Yamanishi H."/>
            <person name="Zabarovsky E."/>
            <person name="Zhu S."/>
            <person name="Zimmer A."/>
            <person name="Hide W."/>
            <person name="Bult C."/>
            <person name="Grimmond S.M."/>
            <person name="Teasdale R.D."/>
            <person name="Liu E.T."/>
            <person name="Brusic V."/>
            <person name="Quackenbush J."/>
            <person name="Wahlestedt C."/>
            <person name="Mattick J.S."/>
            <person name="Hume D.A."/>
            <person name="Kai C."/>
            <person name="Sasaki D."/>
            <person name="Tomaru Y."/>
            <person name="Fukuda S."/>
            <person name="Kanamori-Katayama M."/>
            <person name="Suzuki M."/>
            <person name="Aoki J."/>
            <person name="Arakawa T."/>
            <person name="Iida J."/>
            <person name="Imamura K."/>
            <person name="Itoh M."/>
            <person name="Kato T."/>
            <person name="Kawaji H."/>
            <person name="Kawagashira N."/>
            <person name="Kawashima T."/>
            <person name="Kojima M."/>
            <person name="Kondo S."/>
            <person name="Konno H."/>
            <person name="Nakano K."/>
            <person name="Ninomiya N."/>
            <person name="Nishio T."/>
            <person name="Okada M."/>
            <person name="Plessy C."/>
            <person name="Shibata K."/>
            <person name="Shiraki T."/>
            <person name="Suzuki S."/>
            <person name="Tagami M."/>
            <person name="Waki K."/>
            <person name="Watahiki A."/>
            <person name="Okamura-Oho Y."/>
            <person name="Suzuki H."/>
            <person name="Kawai J."/>
            <person name="Hayashizaki Y."/>
        </authorList>
    </citation>
    <scope>NUCLEOTIDE SEQUENCE [LARGE SCALE MRNA] OF 383-1581 (ISOFORM 1)</scope>
    <source>
        <strain>C57BL/6J</strain>
        <tissue>Urinary bladder</tissue>
    </source>
</reference>
<reference key="4">
    <citation type="journal article" date="2007" name="Proc. Natl. Acad. Sci. U.S.A.">
        <title>Large-scale phosphorylation analysis of mouse liver.</title>
        <authorList>
            <person name="Villen J."/>
            <person name="Beausoleil S.A."/>
            <person name="Gerber S.A."/>
            <person name="Gygi S.P."/>
        </authorList>
    </citation>
    <scope>PHOSPHORYLATION [LARGE SCALE ANALYSIS] AT SER-1133</scope>
    <scope>IDENTIFICATION BY MASS SPECTROMETRY [LARGE SCALE ANALYSIS]</scope>
    <source>
        <tissue>Liver</tissue>
    </source>
</reference>
<reference key="5">
    <citation type="journal article" date="2010" name="Cell">
        <title>A tissue-specific atlas of mouse protein phosphorylation and expression.</title>
        <authorList>
            <person name="Huttlin E.L."/>
            <person name="Jedrychowski M.P."/>
            <person name="Elias J.E."/>
            <person name="Goswami T."/>
            <person name="Rad R."/>
            <person name="Beausoleil S.A."/>
            <person name="Villen J."/>
            <person name="Haas W."/>
            <person name="Sowa M.E."/>
            <person name="Gygi S.P."/>
        </authorList>
    </citation>
    <scope>PHOSPHORYLATION [LARGE SCALE ANALYSIS] AT SER-550; SER-553; SER-572; SER-724 AND SER-1407</scope>
    <scope>IDENTIFICATION BY MASS SPECTROMETRY [LARGE SCALE ANALYSIS]</scope>
    <source>
        <tissue>Brain</tissue>
        <tissue>Kidney</tissue>
        <tissue>Lung</tissue>
        <tissue>Spleen</tissue>
        <tissue>Testis</tissue>
    </source>
</reference>
<reference key="6">
    <citation type="journal article" date="2022" name="Am. J. Hum. Genet.">
        <title>Bi-allelic CAMSAP1 variants cause a clinically recognizable neuronal migration disorder.</title>
        <authorList>
            <person name="Khalaf-Nazzal R."/>
            <person name="Fasham J."/>
            <person name="Inskeep K.A."/>
            <person name="Blizzard L.E."/>
            <person name="Leslie J.S."/>
            <person name="Wakeling M.N."/>
            <person name="Ubeyratna N."/>
            <person name="Mitani T."/>
            <person name="Griffith J.L."/>
            <person name="Baker W."/>
            <person name="Al-Hijawi F."/>
            <person name="Keough K.C."/>
            <person name="Gezdirici A."/>
            <person name="Pena L."/>
            <person name="Spaeth C.G."/>
            <person name="Turnpenny P.D."/>
            <person name="Walsh J.R."/>
            <person name="Ray R."/>
            <person name="Neilson A."/>
            <person name="Kouranova E."/>
            <person name="Cui X."/>
            <person name="Curiel D.T."/>
            <person name="Pehlivan D."/>
            <person name="Akdemir Z.C."/>
            <person name="Posey J.E."/>
            <person name="Lupski J.R."/>
            <person name="Dobyns W.B."/>
            <person name="Stottmann R.W."/>
            <person name="Crosby A.H."/>
            <person name="Baple E.L."/>
        </authorList>
    </citation>
    <scope>TISSUE SPECIFICITY</scope>
    <scope>DEVELOPMENTAL STAGE</scope>
</reference>
<keyword id="KW-0025">Alternative splicing</keyword>
<keyword id="KW-0175">Coiled coil</keyword>
<keyword id="KW-0963">Cytoplasm</keyword>
<keyword id="KW-0206">Cytoskeleton</keyword>
<keyword id="KW-0493">Microtubule</keyword>
<keyword id="KW-0597">Phosphoprotein</keyword>
<keyword id="KW-1185">Reference proteome</keyword>
<accession>A2AHC3</accession>
<accession>Q7TQF8</accession>
<accession>Q8CBV3</accession>
<comment type="function">
    <text evidence="3">Key microtubule-organizing protein that specifically binds the minus-end of non-centrosomal microtubules and regulates their dynamics and organization. Specifically recognizes growing microtubule minus-ends and stabilizes microtubules. Acts on free microtubule minus-ends that are not capped by microtubule-nucleating proteins or other factors and protects microtubule minus-ends from depolymerization. In contrast to CAMSAP2 and CAMSAP3, tracks along the growing tips of minus-end microtubules without significantly affecting the polymerization rate: binds at the very tip of the microtubules minus-end and acts as a minus-end tracking protein (-TIP) that dissociates from microtubules after allowing tubulin incorporation. Through interaction with spectrin may regulate neurite outgrowth.</text>
</comment>
<comment type="subunit">
    <text evidence="3">Interacts with spectrin via SPTBN1; the interaction is direct. Interacts with calmodulin; calcium-dependent it prevents interaction with spectrin.</text>
</comment>
<comment type="subcellular location">
    <subcellularLocation>
        <location evidence="3">Cytoplasm</location>
        <location evidence="3">Cytoskeleton</location>
    </subcellularLocation>
    <text evidence="3">Associates with the minus-end of microtubules. In contrast to CAMSAP2 and CAMSAP3, does not form stretches of decorated microtubule minus-ends.</text>
</comment>
<comment type="alternative products">
    <event type="alternative splicing"/>
    <isoform>
        <id>A2AHC3-1</id>
        <name>1</name>
        <sequence type="displayed"/>
    </isoform>
    <isoform>
        <id>A2AHC3-2</id>
        <name>2</name>
        <sequence type="described" ref="VSP_030802 VSP_030803 VSP_030804"/>
    </isoform>
</comment>
<comment type="tissue specificity">
    <text evidence="8">Expressed in the central nervous system.</text>
</comment>
<comment type="developmental stage">
    <text evidence="8">Highly and ubiquitously expressed in the brain and throughout the first pharyngeal arch, and neural tube at 10.5 dpc. At 14.5 dpc, expression in the brain becomes slightly more localized to the ganglionic eminences and cortex, and present in the caudal neural tube. At late stages of neurogenesis (18.5 dpc), it is most highly expressed in the cortex, particularly in upper layers of differentiated neurons and the ventricular zone. Postnatally, expression is particularly evident in upper cortical layers and in the hippocampus.</text>
</comment>
<comment type="domain">
    <text evidence="6">The CKK domain binds microtubules.</text>
</comment>
<comment type="similarity">
    <text evidence="6">Belongs to the CAMSAP1 family.</text>
</comment>
<comment type="sequence caution" evidence="10">
    <conflict type="erroneous initiation">
        <sequence resource="EMBL-CDS" id="AAH54553"/>
    </conflict>
    <text>Extended N-terminus.</text>
</comment>
<organism>
    <name type="scientific">Mus musculus</name>
    <name type="common">Mouse</name>
    <dbReference type="NCBI Taxonomy" id="10090"/>
    <lineage>
        <taxon>Eukaryota</taxon>
        <taxon>Metazoa</taxon>
        <taxon>Chordata</taxon>
        <taxon>Craniata</taxon>
        <taxon>Vertebrata</taxon>
        <taxon>Euteleostomi</taxon>
        <taxon>Mammalia</taxon>
        <taxon>Eutheria</taxon>
        <taxon>Euarchontoglires</taxon>
        <taxon>Glires</taxon>
        <taxon>Rodentia</taxon>
        <taxon>Myomorpha</taxon>
        <taxon>Muroidea</taxon>
        <taxon>Muridae</taxon>
        <taxon>Murinae</taxon>
        <taxon>Mus</taxon>
        <taxon>Mus</taxon>
    </lineage>
</organism>
<name>CAMP1_MOUSE</name>
<proteinExistence type="evidence at protein level"/>
<evidence type="ECO:0000250" key="1"/>
<evidence type="ECO:0000250" key="2">
    <source>
        <dbReference type="UniProtKB" id="D3Z8E6"/>
    </source>
</evidence>
<evidence type="ECO:0000250" key="3">
    <source>
        <dbReference type="UniProtKB" id="Q5T5Y3"/>
    </source>
</evidence>
<evidence type="ECO:0000255" key="4"/>
<evidence type="ECO:0000255" key="5">
    <source>
        <dbReference type="PROSITE-ProRule" id="PRU00044"/>
    </source>
</evidence>
<evidence type="ECO:0000255" key="6">
    <source>
        <dbReference type="PROSITE-ProRule" id="PRU00841"/>
    </source>
</evidence>
<evidence type="ECO:0000256" key="7">
    <source>
        <dbReference type="SAM" id="MobiDB-lite"/>
    </source>
</evidence>
<evidence type="ECO:0000269" key="8">
    <source>
    </source>
</evidence>
<evidence type="ECO:0000303" key="9">
    <source>
    </source>
</evidence>
<evidence type="ECO:0000305" key="10"/>
<evidence type="ECO:0007744" key="11">
    <source>
    </source>
</evidence>
<evidence type="ECO:0007744" key="12">
    <source>
    </source>
</evidence>
<gene>
    <name type="primary">Camsap1</name>
</gene>